<keyword id="KW-0997">Cell inner membrane</keyword>
<keyword id="KW-1003">Cell membrane</keyword>
<keyword id="KW-0472">Membrane</keyword>
<keyword id="KW-0653">Protein transport</keyword>
<keyword id="KW-1185">Reference proteome</keyword>
<keyword id="KW-0811">Translocation</keyword>
<keyword id="KW-0812">Transmembrane</keyword>
<keyword id="KW-1133">Transmembrane helix</keyword>
<keyword id="KW-0813">Transport</keyword>
<sequence length="127" mass="13689">MSANTEAQGSGRGLEAMKWIVVAILLIVAIVGNYLYRDMMLPLRALAVVILIAAAGGVALLTTKGKATVAFAREARTEVRKVIWPTRQETLHTTLIVAAVTAVMSLILWGLDGILVRLVSFITGLRF</sequence>
<name>SECE_SALTY</name>
<protein>
    <recommendedName>
        <fullName evidence="1">Protein translocase subunit SecE</fullName>
    </recommendedName>
</protein>
<gene>
    <name evidence="1" type="primary">secE</name>
    <name type="ordered locus">STM4147</name>
    <name type="ORF">STMF1.6</name>
</gene>
<evidence type="ECO:0000255" key="1">
    <source>
        <dbReference type="HAMAP-Rule" id="MF_00422"/>
    </source>
</evidence>
<dbReference type="EMBL" id="AF170176">
    <property type="protein sequence ID" value="AAF33494.1"/>
    <property type="molecule type" value="Genomic_DNA"/>
</dbReference>
<dbReference type="EMBL" id="AE006468">
    <property type="protein sequence ID" value="AAL22975.1"/>
    <property type="molecule type" value="Genomic_DNA"/>
</dbReference>
<dbReference type="RefSeq" id="NP_463016.1">
    <property type="nucleotide sequence ID" value="NC_003197.2"/>
</dbReference>
<dbReference type="RefSeq" id="WP_001275691.1">
    <property type="nucleotide sequence ID" value="NC_003197.2"/>
</dbReference>
<dbReference type="STRING" id="99287.STM4147"/>
<dbReference type="PaxDb" id="99287-STM4147"/>
<dbReference type="GeneID" id="1255673"/>
<dbReference type="KEGG" id="stm:STM4147"/>
<dbReference type="PATRIC" id="fig|99287.12.peg.4359"/>
<dbReference type="HOGENOM" id="CLU_113663_0_1_6"/>
<dbReference type="OMA" id="AQESRFD"/>
<dbReference type="PhylomeDB" id="P0A2D3"/>
<dbReference type="BioCyc" id="SENT99287:STM4147-MONOMER"/>
<dbReference type="Proteomes" id="UP000001014">
    <property type="component" value="Chromosome"/>
</dbReference>
<dbReference type="GO" id="GO:0005886">
    <property type="term" value="C:plasma membrane"/>
    <property type="evidence" value="ECO:0000318"/>
    <property type="project" value="GO_Central"/>
</dbReference>
<dbReference type="GO" id="GO:0008320">
    <property type="term" value="F:protein transmembrane transporter activity"/>
    <property type="evidence" value="ECO:0000318"/>
    <property type="project" value="GO_Central"/>
</dbReference>
<dbReference type="GO" id="GO:0065002">
    <property type="term" value="P:intracellular protein transmembrane transport"/>
    <property type="evidence" value="ECO:0007669"/>
    <property type="project" value="UniProtKB-UniRule"/>
</dbReference>
<dbReference type="GO" id="GO:0009306">
    <property type="term" value="P:protein secretion"/>
    <property type="evidence" value="ECO:0007669"/>
    <property type="project" value="UniProtKB-UniRule"/>
</dbReference>
<dbReference type="GO" id="GO:0006605">
    <property type="term" value="P:protein targeting"/>
    <property type="evidence" value="ECO:0007669"/>
    <property type="project" value="UniProtKB-UniRule"/>
</dbReference>
<dbReference type="GO" id="GO:0043952">
    <property type="term" value="P:protein transport by the Sec complex"/>
    <property type="evidence" value="ECO:0000318"/>
    <property type="project" value="GO_Central"/>
</dbReference>
<dbReference type="FunFam" id="1.20.5.1030:FF:000001">
    <property type="entry name" value="Preprotein translocase subunit SecE"/>
    <property type="match status" value="1"/>
</dbReference>
<dbReference type="Gene3D" id="1.20.5.1030">
    <property type="entry name" value="Preprotein translocase secy subunit"/>
    <property type="match status" value="1"/>
</dbReference>
<dbReference type="HAMAP" id="MF_00422">
    <property type="entry name" value="SecE"/>
    <property type="match status" value="1"/>
</dbReference>
<dbReference type="InterPro" id="IPR005807">
    <property type="entry name" value="SecE_bac"/>
</dbReference>
<dbReference type="InterPro" id="IPR038379">
    <property type="entry name" value="SecE_sf"/>
</dbReference>
<dbReference type="InterPro" id="IPR001901">
    <property type="entry name" value="Translocase_SecE/Sec61-g"/>
</dbReference>
<dbReference type="NCBIfam" id="NF004372">
    <property type="entry name" value="PRK05740.1-2"/>
    <property type="match status" value="1"/>
</dbReference>
<dbReference type="NCBIfam" id="NF004374">
    <property type="entry name" value="PRK05740.1-5"/>
    <property type="match status" value="1"/>
</dbReference>
<dbReference type="NCBIfam" id="TIGR00964">
    <property type="entry name" value="secE_bact"/>
    <property type="match status" value="1"/>
</dbReference>
<dbReference type="PANTHER" id="PTHR33910">
    <property type="entry name" value="PROTEIN TRANSLOCASE SUBUNIT SECE"/>
    <property type="match status" value="1"/>
</dbReference>
<dbReference type="PANTHER" id="PTHR33910:SF1">
    <property type="entry name" value="PROTEIN TRANSLOCASE SUBUNIT SECE"/>
    <property type="match status" value="1"/>
</dbReference>
<dbReference type="Pfam" id="PF00584">
    <property type="entry name" value="SecE"/>
    <property type="match status" value="1"/>
</dbReference>
<dbReference type="PRINTS" id="PR01650">
    <property type="entry name" value="SECETRNLCASE"/>
</dbReference>
<dbReference type="PROSITE" id="PS01067">
    <property type="entry name" value="SECE_SEC61G"/>
    <property type="match status" value="1"/>
</dbReference>
<comment type="function">
    <text evidence="1">Essential subunit of the Sec protein translocation channel SecYEG. Clamps together the 2 halves of SecY. May contact the channel plug during translocation.</text>
</comment>
<comment type="subunit">
    <text evidence="1">Component of the Sec protein translocase complex. Heterotrimer consisting of SecY, SecE and SecG subunits. The heterotrimers can form oligomers, although 1 heterotrimer is thought to be able to translocate proteins. Interacts with the ribosome. Interacts with SecDF, and other proteins may be involved. Interacts with SecA.</text>
</comment>
<comment type="subcellular location">
    <subcellularLocation>
        <location evidence="1">Cell inner membrane</location>
        <topology evidence="1">Multi-pass membrane protein</topology>
    </subcellularLocation>
</comment>
<comment type="similarity">
    <text evidence="1">Belongs to the SecE/SEC61-gamma family.</text>
</comment>
<accession>P0A2D3</accession>
<accession>Q9L9K1</accession>
<reference key="1">
    <citation type="journal article" date="2001" name="Nature">
        <title>Complete genome sequence of Salmonella enterica serovar Typhimurium LT2.</title>
        <authorList>
            <person name="McClelland M."/>
            <person name="Sanderson K.E."/>
            <person name="Spieth J."/>
            <person name="Clifton S.W."/>
            <person name="Latreille P."/>
            <person name="Courtney L."/>
            <person name="Porwollik S."/>
            <person name="Ali J."/>
            <person name="Dante M."/>
            <person name="Du F."/>
            <person name="Hou S."/>
            <person name="Layman D."/>
            <person name="Leonard S."/>
            <person name="Nguyen C."/>
            <person name="Scott K."/>
            <person name="Holmes A."/>
            <person name="Grewal N."/>
            <person name="Mulvaney E."/>
            <person name="Ryan E."/>
            <person name="Sun H."/>
            <person name="Florea L."/>
            <person name="Miller W."/>
            <person name="Stoneking T."/>
            <person name="Nhan M."/>
            <person name="Waterston R."/>
            <person name="Wilson R.K."/>
        </authorList>
    </citation>
    <scope>NUCLEOTIDE SEQUENCE [LARGE SCALE GENOMIC DNA]</scope>
    <source>
        <strain>LT2 / SGSC1412 / ATCC 700720</strain>
    </source>
</reference>
<organism>
    <name type="scientific">Salmonella typhimurium (strain LT2 / SGSC1412 / ATCC 700720)</name>
    <dbReference type="NCBI Taxonomy" id="99287"/>
    <lineage>
        <taxon>Bacteria</taxon>
        <taxon>Pseudomonadati</taxon>
        <taxon>Pseudomonadota</taxon>
        <taxon>Gammaproteobacteria</taxon>
        <taxon>Enterobacterales</taxon>
        <taxon>Enterobacteriaceae</taxon>
        <taxon>Salmonella</taxon>
    </lineage>
</organism>
<proteinExistence type="inferred from homology"/>
<feature type="chain" id="PRO_0000104172" description="Protein translocase subunit SecE">
    <location>
        <begin position="1"/>
        <end position="127"/>
    </location>
</feature>
<feature type="transmembrane region" description="Helical" evidence="1">
    <location>
        <begin position="16"/>
        <end position="36"/>
    </location>
</feature>
<feature type="transmembrane region" description="Helical" evidence="1">
    <location>
        <begin position="41"/>
        <end position="61"/>
    </location>
</feature>
<feature type="transmembrane region" description="Helical" evidence="1">
    <location>
        <begin position="96"/>
        <end position="116"/>
    </location>
</feature>